<evidence type="ECO:0000255" key="1">
    <source>
        <dbReference type="HAMAP-Rule" id="MF_00235"/>
    </source>
</evidence>
<feature type="chain" id="PRO_0000158784" description="Adenylate kinase">
    <location>
        <begin position="1"/>
        <end position="199"/>
    </location>
</feature>
<feature type="region of interest" description="NMP" evidence="1">
    <location>
        <begin position="28"/>
        <end position="57"/>
    </location>
</feature>
<feature type="region of interest" description="LID" evidence="1">
    <location>
        <begin position="124"/>
        <end position="134"/>
    </location>
</feature>
<feature type="binding site" evidence="1">
    <location>
        <begin position="8"/>
        <end position="13"/>
    </location>
    <ligand>
        <name>ATP</name>
        <dbReference type="ChEBI" id="CHEBI:30616"/>
    </ligand>
</feature>
<feature type="binding site" evidence="1">
    <location>
        <position position="29"/>
    </location>
    <ligand>
        <name>AMP</name>
        <dbReference type="ChEBI" id="CHEBI:456215"/>
    </ligand>
</feature>
<feature type="binding site" evidence="1">
    <location>
        <position position="34"/>
    </location>
    <ligand>
        <name>AMP</name>
        <dbReference type="ChEBI" id="CHEBI:456215"/>
    </ligand>
</feature>
<feature type="binding site" evidence="1">
    <location>
        <begin position="55"/>
        <end position="57"/>
    </location>
    <ligand>
        <name>AMP</name>
        <dbReference type="ChEBI" id="CHEBI:456215"/>
    </ligand>
</feature>
<feature type="binding site" evidence="1">
    <location>
        <begin position="83"/>
        <end position="86"/>
    </location>
    <ligand>
        <name>AMP</name>
        <dbReference type="ChEBI" id="CHEBI:456215"/>
    </ligand>
</feature>
<feature type="binding site" evidence="1">
    <location>
        <position position="90"/>
    </location>
    <ligand>
        <name>AMP</name>
        <dbReference type="ChEBI" id="CHEBI:456215"/>
    </ligand>
</feature>
<feature type="binding site" evidence="1">
    <location>
        <position position="125"/>
    </location>
    <ligand>
        <name>ATP</name>
        <dbReference type="ChEBI" id="CHEBI:30616"/>
    </ligand>
</feature>
<feature type="binding site" evidence="1">
    <location>
        <position position="131"/>
    </location>
    <ligand>
        <name>AMP</name>
        <dbReference type="ChEBI" id="CHEBI:456215"/>
    </ligand>
</feature>
<feature type="binding site" evidence="1">
    <location>
        <position position="142"/>
    </location>
    <ligand>
        <name>AMP</name>
        <dbReference type="ChEBI" id="CHEBI:456215"/>
    </ligand>
</feature>
<feature type="binding site" evidence="1">
    <location>
        <position position="170"/>
    </location>
    <ligand>
        <name>ATP</name>
        <dbReference type="ChEBI" id="CHEBI:30616"/>
    </ligand>
</feature>
<comment type="function">
    <text evidence="1">Catalyzes the reversible transfer of the terminal phosphate group between ATP and AMP. Plays an important role in cellular energy homeostasis and in adenine nucleotide metabolism.</text>
</comment>
<comment type="catalytic activity">
    <reaction evidence="1">
        <text>AMP + ATP = 2 ADP</text>
        <dbReference type="Rhea" id="RHEA:12973"/>
        <dbReference type="ChEBI" id="CHEBI:30616"/>
        <dbReference type="ChEBI" id="CHEBI:456215"/>
        <dbReference type="ChEBI" id="CHEBI:456216"/>
        <dbReference type="EC" id="2.7.4.3"/>
    </reaction>
</comment>
<comment type="pathway">
    <text evidence="1">Purine metabolism; AMP biosynthesis via salvage pathway; AMP from ADP: step 1/1.</text>
</comment>
<comment type="subunit">
    <text evidence="1">Monomer.</text>
</comment>
<comment type="subcellular location">
    <subcellularLocation>
        <location evidence="1">Cytoplasm</location>
    </subcellularLocation>
</comment>
<comment type="domain">
    <text evidence="1">Consists of three domains, a large central CORE domain and two small peripheral domains, NMPbind and LID, which undergo movements during catalysis. The LID domain closes over the site of phosphoryl transfer upon ATP binding. Assembling and dissambling the active center during each catalytic cycle provides an effective means to prevent ATP hydrolysis.</text>
</comment>
<comment type="similarity">
    <text evidence="1">Belongs to the adenylate kinase family.</text>
</comment>
<reference key="1">
    <citation type="journal article" date="2004" name="Mol. Plant Microbe Interact.">
        <title>The genome sequence of the Gram-positive sugarcane pathogen Leifsonia xyli subsp. xyli.</title>
        <authorList>
            <person name="Monteiro-Vitorello C.B."/>
            <person name="Camargo L.E.A."/>
            <person name="Van Sluys M.A."/>
            <person name="Kitajima J.P."/>
            <person name="Truffi D."/>
            <person name="do Amaral A.M."/>
            <person name="Harakava R."/>
            <person name="de Oliveira J.C.F."/>
            <person name="Wood D."/>
            <person name="de Oliveira M.C."/>
            <person name="Miyaki C.Y."/>
            <person name="Takita M.A."/>
            <person name="da Silva A.C.R."/>
            <person name="Furlan L.R."/>
            <person name="Carraro D.M."/>
            <person name="Camarotte G."/>
            <person name="Almeida N.F. Jr."/>
            <person name="Carrer H."/>
            <person name="Coutinho L.L."/>
            <person name="El-Dorry H.A."/>
            <person name="Ferro M.I.T."/>
            <person name="Gagliardi P.R."/>
            <person name="Giglioti E."/>
            <person name="Goldman M.H.S."/>
            <person name="Goldman G.H."/>
            <person name="Kimura E.T."/>
            <person name="Ferro E.S."/>
            <person name="Kuramae E.E."/>
            <person name="Lemos E.G.M."/>
            <person name="Lemos M.V.F."/>
            <person name="Mauro S.M.Z."/>
            <person name="Machado M.A."/>
            <person name="Marino C.L."/>
            <person name="Menck C.F."/>
            <person name="Nunes L.R."/>
            <person name="Oliveira R.C."/>
            <person name="Pereira G.G."/>
            <person name="Siqueira W."/>
            <person name="de Souza A.A."/>
            <person name="Tsai S.M."/>
            <person name="Zanca A.S."/>
            <person name="Simpson A.J.G."/>
            <person name="Brumbley S.M."/>
            <person name="Setubal J.C."/>
        </authorList>
    </citation>
    <scope>NUCLEOTIDE SEQUENCE [LARGE SCALE GENOMIC DNA]</scope>
    <source>
        <strain>CTCB07</strain>
    </source>
</reference>
<keyword id="KW-0067">ATP-binding</keyword>
<keyword id="KW-0963">Cytoplasm</keyword>
<keyword id="KW-0418">Kinase</keyword>
<keyword id="KW-0545">Nucleotide biosynthesis</keyword>
<keyword id="KW-0547">Nucleotide-binding</keyword>
<keyword id="KW-1185">Reference proteome</keyword>
<keyword id="KW-0808">Transferase</keyword>
<sequence length="199" mass="21487">MLIVGPPGAGKGTQASRITSGYGIPDISTGDIFRANIKNKTELGQQVKAIVDAGDYVPDSLTNELVTGRLAEDDAKGGFLLDGYPRTLEQVKYLDELLGSDGEKLDAVIQLVADREEIVARLTKRAREQGRADDSEEAIRYRQEVYVRETSPLIEVYRERGLLVEVDGLGPVDEVAGRICTALAERGILPLTGTGESVA</sequence>
<dbReference type="EC" id="2.7.4.3" evidence="1"/>
<dbReference type="EMBL" id="AE016822">
    <property type="protein sequence ID" value="AAT89729.1"/>
    <property type="molecule type" value="Genomic_DNA"/>
</dbReference>
<dbReference type="SMR" id="Q6AD15"/>
<dbReference type="STRING" id="281090.Lxx20130"/>
<dbReference type="KEGG" id="lxx:Lxx20130"/>
<dbReference type="eggNOG" id="COG0563">
    <property type="taxonomic scope" value="Bacteria"/>
</dbReference>
<dbReference type="HOGENOM" id="CLU_032354_4_1_11"/>
<dbReference type="UniPathway" id="UPA00588">
    <property type="reaction ID" value="UER00649"/>
</dbReference>
<dbReference type="Proteomes" id="UP000001306">
    <property type="component" value="Chromosome"/>
</dbReference>
<dbReference type="GO" id="GO:0005737">
    <property type="term" value="C:cytoplasm"/>
    <property type="evidence" value="ECO:0007669"/>
    <property type="project" value="UniProtKB-SubCell"/>
</dbReference>
<dbReference type="GO" id="GO:0004017">
    <property type="term" value="F:adenylate kinase activity"/>
    <property type="evidence" value="ECO:0007669"/>
    <property type="project" value="UniProtKB-UniRule"/>
</dbReference>
<dbReference type="GO" id="GO:0005524">
    <property type="term" value="F:ATP binding"/>
    <property type="evidence" value="ECO:0007669"/>
    <property type="project" value="UniProtKB-UniRule"/>
</dbReference>
<dbReference type="GO" id="GO:0044209">
    <property type="term" value="P:AMP salvage"/>
    <property type="evidence" value="ECO:0007669"/>
    <property type="project" value="UniProtKB-UniRule"/>
</dbReference>
<dbReference type="CDD" id="cd01428">
    <property type="entry name" value="ADK"/>
    <property type="match status" value="1"/>
</dbReference>
<dbReference type="Gene3D" id="3.40.50.300">
    <property type="entry name" value="P-loop containing nucleotide triphosphate hydrolases"/>
    <property type="match status" value="1"/>
</dbReference>
<dbReference type="HAMAP" id="MF_00235">
    <property type="entry name" value="Adenylate_kinase_Adk"/>
    <property type="match status" value="1"/>
</dbReference>
<dbReference type="InterPro" id="IPR000850">
    <property type="entry name" value="Adenylat/UMP-CMP_kin"/>
</dbReference>
<dbReference type="InterPro" id="IPR033690">
    <property type="entry name" value="Adenylat_kinase_CS"/>
</dbReference>
<dbReference type="InterPro" id="IPR027417">
    <property type="entry name" value="P-loop_NTPase"/>
</dbReference>
<dbReference type="NCBIfam" id="NF001381">
    <property type="entry name" value="PRK00279.1-3"/>
    <property type="match status" value="1"/>
</dbReference>
<dbReference type="NCBIfam" id="NF011100">
    <property type="entry name" value="PRK14527.1"/>
    <property type="match status" value="1"/>
</dbReference>
<dbReference type="NCBIfam" id="NF011104">
    <property type="entry name" value="PRK14531.1"/>
    <property type="match status" value="1"/>
</dbReference>
<dbReference type="NCBIfam" id="NF011105">
    <property type="entry name" value="PRK14532.1"/>
    <property type="match status" value="1"/>
</dbReference>
<dbReference type="PANTHER" id="PTHR23359">
    <property type="entry name" value="NUCLEOTIDE KINASE"/>
    <property type="match status" value="1"/>
</dbReference>
<dbReference type="Pfam" id="PF00406">
    <property type="entry name" value="ADK"/>
    <property type="match status" value="1"/>
</dbReference>
<dbReference type="PRINTS" id="PR00094">
    <property type="entry name" value="ADENYLTKNASE"/>
</dbReference>
<dbReference type="SUPFAM" id="SSF52540">
    <property type="entry name" value="P-loop containing nucleoside triphosphate hydrolases"/>
    <property type="match status" value="1"/>
</dbReference>
<dbReference type="PROSITE" id="PS00113">
    <property type="entry name" value="ADENYLATE_KINASE"/>
    <property type="match status" value="1"/>
</dbReference>
<proteinExistence type="inferred from homology"/>
<organism>
    <name type="scientific">Leifsonia xyli subsp. xyli (strain CTCB07)</name>
    <dbReference type="NCBI Taxonomy" id="281090"/>
    <lineage>
        <taxon>Bacteria</taxon>
        <taxon>Bacillati</taxon>
        <taxon>Actinomycetota</taxon>
        <taxon>Actinomycetes</taxon>
        <taxon>Micrococcales</taxon>
        <taxon>Microbacteriaceae</taxon>
        <taxon>Leifsonia</taxon>
    </lineage>
</organism>
<accession>Q6AD15</accession>
<name>KAD_LEIXX</name>
<gene>
    <name evidence="1" type="primary">adk</name>
    <name type="ordered locus">Lxx20130</name>
</gene>
<protein>
    <recommendedName>
        <fullName evidence="1">Adenylate kinase</fullName>
        <shortName evidence="1">AK</shortName>
        <ecNumber evidence="1">2.7.4.3</ecNumber>
    </recommendedName>
    <alternativeName>
        <fullName evidence="1">ATP-AMP transphosphorylase</fullName>
    </alternativeName>
    <alternativeName>
        <fullName evidence="1">ATP:AMP phosphotransferase</fullName>
    </alternativeName>
    <alternativeName>
        <fullName evidence="1">Adenylate monophosphate kinase</fullName>
    </alternativeName>
</protein>